<protein>
    <recommendedName>
        <fullName evidence="1">Hemagglutinin</fullName>
    </recommendedName>
    <component>
        <recommendedName>
            <fullName evidence="1">Hemagglutinin HA1 chain</fullName>
        </recommendedName>
    </component>
    <component>
        <recommendedName>
            <fullName evidence="1">Hemagglutinin HA2 chain</fullName>
        </recommendedName>
    </component>
</protein>
<accession>P09345</accession>
<accession>Q0A2H6</accession>
<feature type="signal peptide" evidence="1">
    <location>
        <begin position="1"/>
        <end position="16"/>
    </location>
</feature>
<feature type="chain" id="PRO_0000440394" description="Hemagglutinin" evidence="1">
    <location>
        <begin position="17"/>
        <end position="564"/>
    </location>
</feature>
<feature type="chain" id="PRO_0000440395" description="Hemagglutinin HA1 chain" evidence="1">
    <location>
        <begin position="17"/>
        <end position="341"/>
    </location>
</feature>
<feature type="chain" id="PRO_0000038900" description="Hemagglutinin HA2 chain" evidence="1">
    <location>
        <begin position="343"/>
        <end position="564"/>
    </location>
</feature>
<feature type="topological domain" description="Extracellular" evidence="1">
    <location>
        <begin position="17"/>
        <end position="527"/>
    </location>
</feature>
<feature type="transmembrane region" description="Helical" evidence="1">
    <location>
        <begin position="528"/>
        <end position="548"/>
    </location>
</feature>
<feature type="topological domain" description="Cytoplasmic" evidence="1">
    <location>
        <begin position="549"/>
        <end position="564"/>
    </location>
</feature>
<feature type="site" description="Cleavage; by host" evidence="1">
    <location>
        <begin position="342"/>
        <end position="343"/>
    </location>
</feature>
<feature type="lipid moiety-binding region" description="S-palmitoyl cysteine; by host" evidence="1">
    <location>
        <position position="553"/>
    </location>
</feature>
<feature type="lipid moiety-binding region" description="S-palmitoyl cysteine; by host" evidence="1">
    <location>
        <position position="560"/>
    </location>
</feature>
<feature type="lipid moiety-binding region" description="S-palmitoyl cysteine; by host" evidence="1">
    <location>
        <position position="563"/>
    </location>
</feature>
<feature type="glycosylation site" description="N-linked (GlcNAc...) asparagine; by host" evidence="1">
    <location>
        <position position="26"/>
    </location>
</feature>
<feature type="glycosylation site" description="N-linked (GlcNAc...) asparagine; by host" evidence="1">
    <location>
        <position position="39"/>
    </location>
</feature>
<feature type="glycosylation site" description="N-linked (GlcNAc...) asparagine; by host" evidence="1">
    <location>
        <position position="181"/>
    </location>
</feature>
<feature type="glycosylation site" description="N-linked (GlcNAc...) asparagine; by host" evidence="1">
    <location>
        <position position="302"/>
    </location>
</feature>
<feature type="glycosylation site" description="N-linked (GlcNAc...) asparagine; by host" evidence="1">
    <location>
        <position position="496"/>
    </location>
</feature>
<feature type="disulfide bond" description="Interchain (between HA1 and HA2 chains)" evidence="1">
    <location>
        <begin position="20"/>
        <end position="479"/>
    </location>
</feature>
<feature type="disulfide bond" evidence="1">
    <location>
        <begin position="58"/>
        <end position="290"/>
    </location>
</feature>
<feature type="disulfide bond" evidence="1">
    <location>
        <begin position="71"/>
        <end position="83"/>
    </location>
</feature>
<feature type="disulfide bond" evidence="1">
    <location>
        <begin position="106"/>
        <end position="151"/>
    </location>
</feature>
<feature type="disulfide bond" evidence="1">
    <location>
        <begin position="294"/>
        <end position="318"/>
    </location>
</feature>
<feature type="disulfide bond" evidence="1">
    <location>
        <begin position="486"/>
        <end position="490"/>
    </location>
</feature>
<feature type="sequence conflict" description="In Ref. 1; CAA30719/CAA30680." evidence="2" ref="1">
    <original>V</original>
    <variation>L</variation>
    <location>
        <position position="89"/>
    </location>
</feature>
<feature type="sequence conflict" description="In Ref. 1; CAA30719/CAA30680." evidence="2" ref="1">
    <original>S</original>
    <variation>L</variation>
    <location>
        <position position="93"/>
    </location>
</feature>
<feature type="sequence conflict" description="In Ref. 1; CAA30719/CAA30680." evidence="2" ref="1">
    <original>H</original>
    <variation>Y</variation>
    <location>
        <position position="119"/>
    </location>
</feature>
<feature type="sequence conflict" description="In Ref. 1; CAA30719/CAA30680." evidence="2" ref="1">
    <original>Q</original>
    <variation>R</variation>
    <location>
        <position position="131"/>
    </location>
</feature>
<feature type="sequence conflict" description="In Ref. 1; CAA30719/CAA30680." evidence="2" ref="1">
    <original>F</original>
    <variation>L</variation>
    <location>
        <position position="160"/>
    </location>
</feature>
<feature type="sequence conflict" description="In Ref. 1; CAA30719/CAA30680." evidence="2" ref="1">
    <original>DNA</original>
    <variation>NNT</variation>
    <location>
        <begin position="170"/>
        <end position="172"/>
    </location>
</feature>
<feature type="sequence conflict" description="In Ref. 1; CAA30719/CAA30680." evidence="2" ref="1">
    <original>E</original>
    <variation>R</variation>
    <location>
        <position position="267"/>
    </location>
</feature>
<feature type="sequence conflict" description="In Ref. 1; CAA30719/CAA30680." evidence="2" ref="1">
    <original>A</original>
    <variation>E</variation>
    <location>
        <position position="300"/>
    </location>
</feature>
<feature type="sequence conflict" description="In Ref. 1; CAA30719/CAA30680." evidence="2" ref="1">
    <original>QFK</original>
    <variation>RFE</variation>
    <location>
        <begin position="404"/>
        <end position="406"/>
    </location>
</feature>
<feature type="sequence conflict" description="In Ref. 1; CAA30719/CAA30680." evidence="2" ref="1">
    <original>K</original>
    <variation>N</variation>
    <location>
        <position position="458"/>
    </location>
</feature>
<organism>
    <name type="scientific">Influenza A virus (strain A/Chicken/Scotland/1959 H5N1)</name>
    <dbReference type="NCBI Taxonomy" id="402527"/>
    <lineage>
        <taxon>Viruses</taxon>
        <taxon>Riboviria</taxon>
        <taxon>Orthornavirae</taxon>
        <taxon>Negarnaviricota</taxon>
        <taxon>Polyploviricotina</taxon>
        <taxon>Insthoviricetes</taxon>
        <taxon>Articulavirales</taxon>
        <taxon>Orthomyxoviridae</taxon>
        <taxon>Alphainfluenzavirus</taxon>
        <taxon>Alphainfluenzavirus influenzae</taxon>
        <taxon>Influenza A virus</taxon>
    </lineage>
</organism>
<organismHost>
    <name type="scientific">Aves</name>
    <dbReference type="NCBI Taxonomy" id="8782"/>
</organismHost>
<organismHost>
    <name type="scientific">Felis catus</name>
    <name type="common">Cat</name>
    <name type="synonym">Felis silvestris catus</name>
    <dbReference type="NCBI Taxonomy" id="9685"/>
</organismHost>
<organismHost>
    <name type="scientific">Homo sapiens</name>
    <name type="common">Human</name>
    <dbReference type="NCBI Taxonomy" id="9606"/>
</organismHost>
<organismHost>
    <name type="scientific">Panthera pardus</name>
    <name type="common">Leopard</name>
    <name type="synonym">Felis pardus</name>
    <dbReference type="NCBI Taxonomy" id="9691"/>
</organismHost>
<organismHost>
    <name type="scientific">Panthera tigris</name>
    <name type="common">Tiger</name>
    <dbReference type="NCBI Taxonomy" id="9694"/>
</organismHost>
<organismHost>
    <name type="scientific">Sus scrofa</name>
    <name type="common">Pig</name>
    <dbReference type="NCBI Taxonomy" id="9823"/>
</organismHost>
<reference key="1">
    <citation type="journal article" date="1988" name="Nucleic Acids Res.">
        <title>Complete sequence of a cDNA clone of the hemagglutinin gene of influenza A/Chicken/Scotland/59 (H5N1) virus: comparison with contemporary North American and European strains.</title>
        <authorList>
            <person name="De B.K."/>
            <person name="Brownlee G.G."/>
            <person name="Kendal A.P."/>
            <person name="Shaw M.W."/>
        </authorList>
    </citation>
    <scope>NUCLEOTIDE SEQUENCE [GENOMIC RNA]</scope>
</reference>
<reference key="2">
    <citation type="journal article" date="2006" name="Science">
        <title>Large-scale sequence analysis of avian influenza isolates.</title>
        <authorList>
            <person name="Obenauer J.C."/>
            <person name="Denson J."/>
            <person name="Mehta P.K."/>
            <person name="Su X."/>
            <person name="Mukatira S."/>
            <person name="Finkelstein D.B."/>
            <person name="Xu X."/>
            <person name="Wang J."/>
            <person name="Ma J."/>
            <person name="Fan Y."/>
            <person name="Rakestraw K.M."/>
            <person name="Webster R.G."/>
            <person name="Hoffmann E."/>
            <person name="Krauss S."/>
            <person name="Zheng J."/>
            <person name="Zhang Z."/>
            <person name="Naeve C.W."/>
        </authorList>
    </citation>
    <scope>NUCLEOTIDE SEQUENCE [GENOMIC RNA]</scope>
</reference>
<proteinExistence type="evidence at transcript level"/>
<dbReference type="EMBL" id="X07826">
    <property type="protein sequence ID" value="CAA30680.1"/>
    <property type="molecule type" value="Genomic_RNA"/>
</dbReference>
<dbReference type="EMBL" id="X07869">
    <property type="protein sequence ID" value="CAA30719.1"/>
    <property type="molecule type" value="mRNA"/>
</dbReference>
<dbReference type="EMBL" id="CY015081">
    <property type="protein sequence ID" value="ABI85106.1"/>
    <property type="molecule type" value="Genomic_RNA"/>
</dbReference>
<dbReference type="SMR" id="P09345"/>
<dbReference type="GlyCosmos" id="P09345">
    <property type="glycosylation" value="5 sites, No reported glycans"/>
</dbReference>
<dbReference type="Proteomes" id="UP000169634">
    <property type="component" value="Genome"/>
</dbReference>
<dbReference type="GO" id="GO:0020002">
    <property type="term" value="C:host cell plasma membrane"/>
    <property type="evidence" value="ECO:0007669"/>
    <property type="project" value="UniProtKB-SubCell"/>
</dbReference>
<dbReference type="GO" id="GO:0016020">
    <property type="term" value="C:membrane"/>
    <property type="evidence" value="ECO:0007669"/>
    <property type="project" value="UniProtKB-UniRule"/>
</dbReference>
<dbReference type="GO" id="GO:0019031">
    <property type="term" value="C:viral envelope"/>
    <property type="evidence" value="ECO:0007669"/>
    <property type="project" value="UniProtKB-UniRule"/>
</dbReference>
<dbReference type="GO" id="GO:0055036">
    <property type="term" value="C:virion membrane"/>
    <property type="evidence" value="ECO:0007669"/>
    <property type="project" value="UniProtKB-SubCell"/>
</dbReference>
<dbReference type="GO" id="GO:0046789">
    <property type="term" value="F:host cell surface receptor binding"/>
    <property type="evidence" value="ECO:0007669"/>
    <property type="project" value="UniProtKB-UniRule"/>
</dbReference>
<dbReference type="GO" id="GO:0075512">
    <property type="term" value="P:clathrin-dependent endocytosis of virus by host cell"/>
    <property type="evidence" value="ECO:0007669"/>
    <property type="project" value="UniProtKB-UniRule"/>
</dbReference>
<dbReference type="GO" id="GO:0039654">
    <property type="term" value="P:fusion of virus membrane with host endosome membrane"/>
    <property type="evidence" value="ECO:0007669"/>
    <property type="project" value="UniProtKB-UniRule"/>
</dbReference>
<dbReference type="GO" id="GO:0019064">
    <property type="term" value="P:fusion of virus membrane with host plasma membrane"/>
    <property type="evidence" value="ECO:0007669"/>
    <property type="project" value="InterPro"/>
</dbReference>
<dbReference type="GO" id="GO:0046761">
    <property type="term" value="P:viral budding from plasma membrane"/>
    <property type="evidence" value="ECO:0007669"/>
    <property type="project" value="UniProtKB-UniRule"/>
</dbReference>
<dbReference type="GO" id="GO:0019062">
    <property type="term" value="P:virion attachment to host cell"/>
    <property type="evidence" value="ECO:0007669"/>
    <property type="project" value="UniProtKB-KW"/>
</dbReference>
<dbReference type="FunFam" id="3.90.209.20:FF:000001">
    <property type="entry name" value="Hemagglutinin"/>
    <property type="match status" value="1"/>
</dbReference>
<dbReference type="Gene3D" id="3.90.20.10">
    <property type="match status" value="1"/>
</dbReference>
<dbReference type="Gene3D" id="3.90.209.20">
    <property type="match status" value="1"/>
</dbReference>
<dbReference type="HAMAP" id="MF_04072">
    <property type="entry name" value="INFV_HEMA"/>
    <property type="match status" value="1"/>
</dbReference>
<dbReference type="InterPro" id="IPR008980">
    <property type="entry name" value="Capsid_hemagglutn"/>
</dbReference>
<dbReference type="InterPro" id="IPR013828">
    <property type="entry name" value="Hemagglutn_HA1_a/b_dom_sf"/>
</dbReference>
<dbReference type="InterPro" id="IPR000149">
    <property type="entry name" value="Hemagglutn_influenz_A"/>
</dbReference>
<dbReference type="InterPro" id="IPR001364">
    <property type="entry name" value="Hemagglutn_influenz_A/B"/>
</dbReference>
<dbReference type="Pfam" id="PF00509">
    <property type="entry name" value="Hemagglutinin"/>
    <property type="match status" value="1"/>
</dbReference>
<dbReference type="PRINTS" id="PR00330">
    <property type="entry name" value="HEMAGGLUTN1"/>
</dbReference>
<dbReference type="PRINTS" id="PR00329">
    <property type="entry name" value="HEMAGGLUTN12"/>
</dbReference>
<dbReference type="SUPFAM" id="SSF58064">
    <property type="entry name" value="Influenza hemagglutinin (stalk)"/>
    <property type="match status" value="1"/>
</dbReference>
<dbReference type="SUPFAM" id="SSF49818">
    <property type="entry name" value="Viral protein domain"/>
    <property type="match status" value="1"/>
</dbReference>
<name>HEMA_I59A0</name>
<evidence type="ECO:0000255" key="1">
    <source>
        <dbReference type="HAMAP-Rule" id="MF_04072"/>
    </source>
</evidence>
<evidence type="ECO:0000305" key="2"/>
<sequence>MERIVLLLAIVSLVKSDQICIGYHANKSTKQVDTIMEKNVTVTHAQDILERTHNGKLCSLNGVKPLILRDCSVAGWLLGNPMCDEFLNVPEWSYIVEKDNPINSLCYPGDFNDYEELKHLLSSTNHFEKIQIIPRSSWSNHDASSGVSSACPYIGRSSFFRNVVWLIKKDNAYPTIKRSYNNTNQEDLLILWGIHHPNDAAEQTKLYQNPTTYVSVGTSTLNQRSIPEIATRPKVNGQSGRMEFFWTILKPNDAINFESNGNFIAPEYAYKIVKKGDSAIMKSGLAYGNCDTKCQTPVGAINSSMPFHNIHPHTIGECPKYVKSDRLVLATGLRNVPQRKKRGLFGAIAGFIEGGWQGMVDGWYGYHHSNEQGSGYAADKESTQKAIDGITNKVNSIIDKMNTQFKAVGKEFNNLERRVENLNKKMEDGFLDVWTYNVELLVLMENERTLDFHDSNVKNLYDKVRLQLKDNARELGNGCFEFYHKCDNECMESVRNGTYDYPQYSEEARLNREEISGVKLESMGVYQILSIYSTVASSLALAIMIAGLSFWMCSNGSLQCRICI</sequence>
<comment type="function">
    <text>Binds to sialic acid-containing receptors on the cell surface, bringing about the attachment of the virus particle to the cell. This attachment induces virion internalization of about two third of the virus particles through clathrin-dependent endocytosis and about one third through a clathrin- and caveolin-independent pathway. Plays a major role in the determination of host range restriction and virulence. Class I viral fusion protein. Responsible for penetration of the virus into the cell cytoplasm by mediating the fusion of the membrane of the endocytosed virus particle with the endosomal membrane. Low pH in endosomes induces an irreversible conformational change in HA2, releasing the fusion hydrophobic peptide. Several trimers are required to form a competent fusion pore.</text>
</comment>
<comment type="function">
    <text evidence="1">Binds to sialic acid-containing receptors on the cell surface, bringing about the attachment of the virus particle to the cell. This attachment induces virion internalization either through clathrin-dependent endocytosis or through clathrin- and caveolin-independent pathway. Plays a major role in the determination of host range restriction and virulence. Class I viral fusion protein. Responsible for penetration of the virus into the cell cytoplasm by mediating the fusion of the membrane of the endocytosed virus particle with the endosomal membrane. Low pH in endosomes induces an irreversible conformational change in HA2, releasing the fusion hydrophobic peptide. Several trimers are required to form a competent fusion pore.</text>
</comment>
<comment type="subunit">
    <text evidence="1">Homotrimer of disulfide-linked HA1-HA2.</text>
</comment>
<comment type="subcellular location">
    <subcellularLocation>
        <location evidence="1">Virion membrane</location>
        <topology evidence="1">Single-pass type I membrane protein</topology>
    </subcellularLocation>
    <subcellularLocation>
        <location evidence="1">Host apical cell membrane</location>
        <topology evidence="1">Single-pass type I membrane protein</topology>
    </subcellularLocation>
    <text evidence="1">Targeted to the apical plasma membrane in epithelial polarized cells through a signal present in the transmembrane domain. Associated with glycosphingolipid- and cholesterol-enriched detergent-resistant lipid rafts.</text>
</comment>
<comment type="PTM">
    <text evidence="1">Palmitoylated.</text>
</comment>
<comment type="PTM">
    <text evidence="1">In natural infection, inactive HA is matured into HA1 and HA2 outside the cell by one or more trypsin-like, arginine-specific endoprotease secreted by the bronchial epithelial cells. One identified protease that may be involved in this process is secreted in lungs by club cells.</text>
</comment>
<comment type="miscellaneous">
    <text>Major glycoprotein, comprises over 80% of the envelope proteins present in virus particle.</text>
</comment>
<comment type="miscellaneous">
    <text>The extent of infection into host organism is determined by HA. Influenza viruses bud from the apical surface of polarized epithelial cells (e.g. bronchial epithelial cells) into lumen of lungs and are therefore usually pneumotropic. The reason is that HA is cleaved by tryptase clara which is restricted to lungs. However, HAs of H5 and H7 pantropic avian viruses subtypes can be cleaved by furin and subtilisin-type enzymes, allowing the virus to grow in other organs than lungs.</text>
</comment>
<comment type="miscellaneous">
    <text evidence="2">The influenza A genome consist of 8 RNA segments. Genetic variation of hemagglutinin and/or neuraminidase genes results in the emergence of new influenza strains. The mechanism of variation can be the result of point mutations or the result of genetic reassortment between segments of two different strains.</text>
</comment>
<comment type="similarity">
    <text evidence="1">Belongs to the influenza viruses hemagglutinin family.</text>
</comment>
<gene>
    <name evidence="1" type="primary">HA</name>
</gene>
<keyword id="KW-1167">Clathrin- and caveolin-independent endocytosis of virus by host</keyword>
<keyword id="KW-1165">Clathrin-mediated endocytosis of virus by host</keyword>
<keyword id="KW-1015">Disulfide bond</keyword>
<keyword id="KW-1170">Fusion of virus membrane with host endosomal membrane</keyword>
<keyword id="KW-1168">Fusion of virus membrane with host membrane</keyword>
<keyword id="KW-0325">Glycoprotein</keyword>
<keyword id="KW-0348">Hemagglutinin</keyword>
<keyword id="KW-1032">Host cell membrane</keyword>
<keyword id="KW-1043">Host membrane</keyword>
<keyword id="KW-0945">Host-virus interaction</keyword>
<keyword id="KW-0449">Lipoprotein</keyword>
<keyword id="KW-0472">Membrane</keyword>
<keyword id="KW-0564">Palmitate</keyword>
<keyword id="KW-0732">Signal</keyword>
<keyword id="KW-0812">Transmembrane</keyword>
<keyword id="KW-1133">Transmembrane helix</keyword>
<keyword id="KW-1161">Viral attachment to host cell</keyword>
<keyword id="KW-0261">Viral envelope protein</keyword>
<keyword id="KW-1162">Viral penetration into host cytoplasm</keyword>
<keyword id="KW-0946">Virion</keyword>
<keyword id="KW-1164">Virus endocytosis by host</keyword>
<keyword id="KW-1160">Virus entry into host cell</keyword>